<sequence>MRRELAIEFSRVTESAALAGYKWLGRGDKNTADGAAVNAMRIMLNQVNIDGTIVIGEGEIDEAPMLYIGEKVGTGRGDAVDIAVDPIEGTRMTAMGQANALAVLAVGDKGCFLNAPDMYMEKLIVGPGAKGTIDLNLPLADNLRNVAAALGKPLSELTVTILAKPRHDAVIAEMQQLGVRVFAIPDGDVAASILTCMPDSEVDVLYGIGGAPEGVVSAAVIRALDGDMNGRLLARHDVKGDNEENRRIGEQELARCKAMGIEAGKVLRLGDMARSDNVIFSATGITKGDLLEGISRKGNIATTETLLIRGKSRTIRRIQSIHYLDRKDPEMQVHIL</sequence>
<comment type="function">
    <text evidence="1">Catalyzes the hydrolysis of fructose 1,6-bisphosphate to fructose 6-phosphate.</text>
</comment>
<comment type="catalytic activity">
    <reaction>
        <text>beta-D-fructose 1,6-bisphosphate + H2O = beta-D-fructose 6-phosphate + phosphate</text>
        <dbReference type="Rhea" id="RHEA:11064"/>
        <dbReference type="ChEBI" id="CHEBI:15377"/>
        <dbReference type="ChEBI" id="CHEBI:32966"/>
        <dbReference type="ChEBI" id="CHEBI:43474"/>
        <dbReference type="ChEBI" id="CHEBI:57634"/>
        <dbReference type="EC" id="3.1.3.11"/>
    </reaction>
</comment>
<comment type="cofactor">
    <cofactor evidence="1">
        <name>Mn(2+)</name>
        <dbReference type="ChEBI" id="CHEBI:29035"/>
    </cofactor>
</comment>
<comment type="pathway">
    <text>Carbohydrate biosynthesis; gluconeogenesis.</text>
</comment>
<comment type="subunit">
    <text evidence="1">Homodimer.</text>
</comment>
<comment type="subcellular location">
    <subcellularLocation>
        <location evidence="1">Cytoplasm</location>
    </subcellularLocation>
</comment>
<comment type="similarity">
    <text evidence="2">Belongs to the FBPase class 2 family.</text>
</comment>
<keyword id="KW-0119">Carbohydrate metabolism</keyword>
<keyword id="KW-0963">Cytoplasm</keyword>
<keyword id="KW-0378">Hydrolase</keyword>
<keyword id="KW-0464">Manganese</keyword>
<keyword id="KW-0479">Metal-binding</keyword>
<keyword id="KW-1185">Reference proteome</keyword>
<accession>P0A9D0</accession>
<accession>P11007</accession>
<accession>P28860</accession>
<accession>P28900</accession>
<proteinExistence type="inferred from homology"/>
<dbReference type="EC" id="3.1.3.11"/>
<dbReference type="EMBL" id="AE014075">
    <property type="protein sequence ID" value="AAN83305.1"/>
    <property type="molecule type" value="Genomic_DNA"/>
</dbReference>
<dbReference type="RefSeq" id="WP_001250644.1">
    <property type="nucleotide sequence ID" value="NZ_CP051263.1"/>
</dbReference>
<dbReference type="SMR" id="P0A9D0"/>
<dbReference type="STRING" id="199310.c4877"/>
<dbReference type="GeneID" id="93777973"/>
<dbReference type="KEGG" id="ecc:c4877"/>
<dbReference type="eggNOG" id="COG1494">
    <property type="taxonomic scope" value="Bacteria"/>
</dbReference>
<dbReference type="HOGENOM" id="CLU_054938_0_0_6"/>
<dbReference type="BioCyc" id="ECOL199310:C4877-MONOMER"/>
<dbReference type="UniPathway" id="UPA00138"/>
<dbReference type="Proteomes" id="UP000001410">
    <property type="component" value="Chromosome"/>
</dbReference>
<dbReference type="GO" id="GO:0005829">
    <property type="term" value="C:cytosol"/>
    <property type="evidence" value="ECO:0007669"/>
    <property type="project" value="TreeGrafter"/>
</dbReference>
<dbReference type="GO" id="GO:0042132">
    <property type="term" value="F:fructose 1,6-bisphosphate 1-phosphatase activity"/>
    <property type="evidence" value="ECO:0007669"/>
    <property type="project" value="UniProtKB-EC"/>
</dbReference>
<dbReference type="GO" id="GO:0046872">
    <property type="term" value="F:metal ion binding"/>
    <property type="evidence" value="ECO:0007669"/>
    <property type="project" value="UniProtKB-KW"/>
</dbReference>
<dbReference type="GO" id="GO:0030388">
    <property type="term" value="P:fructose 1,6-bisphosphate metabolic process"/>
    <property type="evidence" value="ECO:0007669"/>
    <property type="project" value="TreeGrafter"/>
</dbReference>
<dbReference type="GO" id="GO:0006094">
    <property type="term" value="P:gluconeogenesis"/>
    <property type="evidence" value="ECO:0007669"/>
    <property type="project" value="UniProtKB-UniPathway"/>
</dbReference>
<dbReference type="GO" id="GO:0006071">
    <property type="term" value="P:glycerol metabolic process"/>
    <property type="evidence" value="ECO:0007669"/>
    <property type="project" value="InterPro"/>
</dbReference>
<dbReference type="CDD" id="cd01516">
    <property type="entry name" value="FBPase_glpX"/>
    <property type="match status" value="1"/>
</dbReference>
<dbReference type="FunFam" id="3.40.190.90:FF:000001">
    <property type="entry name" value="Fructose-1,6-bisphosphatase"/>
    <property type="match status" value="1"/>
</dbReference>
<dbReference type="Gene3D" id="3.40.190.90">
    <property type="match status" value="1"/>
</dbReference>
<dbReference type="Gene3D" id="3.30.540.10">
    <property type="entry name" value="Fructose-1,6-Bisphosphatase, subunit A, domain 1"/>
    <property type="match status" value="1"/>
</dbReference>
<dbReference type="InterPro" id="IPR004464">
    <property type="entry name" value="FBPase_class-2/SBPase"/>
</dbReference>
<dbReference type="NCBIfam" id="TIGR00330">
    <property type="entry name" value="glpX"/>
    <property type="match status" value="1"/>
</dbReference>
<dbReference type="PANTHER" id="PTHR30447:SF0">
    <property type="entry name" value="FRUCTOSE-1,6-BISPHOSPHATASE 1 CLASS 2-RELATED"/>
    <property type="match status" value="1"/>
</dbReference>
<dbReference type="PANTHER" id="PTHR30447">
    <property type="entry name" value="FRUCTOSE-1,6-BISPHOSPHATASE CLASS 2"/>
    <property type="match status" value="1"/>
</dbReference>
<dbReference type="Pfam" id="PF03320">
    <property type="entry name" value="FBPase_glpX"/>
    <property type="match status" value="1"/>
</dbReference>
<dbReference type="PIRSF" id="PIRSF004532">
    <property type="entry name" value="GlpX"/>
    <property type="match status" value="1"/>
</dbReference>
<dbReference type="SUPFAM" id="SSF56655">
    <property type="entry name" value="Carbohydrate phosphatase"/>
    <property type="match status" value="1"/>
</dbReference>
<organism>
    <name type="scientific">Escherichia coli O6:H1 (strain CFT073 / ATCC 700928 / UPEC)</name>
    <dbReference type="NCBI Taxonomy" id="199310"/>
    <lineage>
        <taxon>Bacteria</taxon>
        <taxon>Pseudomonadati</taxon>
        <taxon>Pseudomonadota</taxon>
        <taxon>Gammaproteobacteria</taxon>
        <taxon>Enterobacterales</taxon>
        <taxon>Enterobacteriaceae</taxon>
        <taxon>Escherichia</taxon>
    </lineage>
</organism>
<feature type="chain" id="PRO_0000201101" description="Fructose-1,6-bisphosphatase class 2">
    <location>
        <begin position="1"/>
        <end position="336"/>
    </location>
</feature>
<feature type="binding site" evidence="1">
    <location>
        <position position="33"/>
    </location>
    <ligand>
        <name>Mn(2+)</name>
        <dbReference type="ChEBI" id="CHEBI:29035"/>
        <label>1</label>
    </ligand>
</feature>
<feature type="binding site" evidence="1">
    <location>
        <position position="57"/>
    </location>
    <ligand>
        <name>Mn(2+)</name>
        <dbReference type="ChEBI" id="CHEBI:29035"/>
        <label>1</label>
    </ligand>
</feature>
<feature type="binding site" evidence="1">
    <location>
        <position position="85"/>
    </location>
    <ligand>
        <name>Mn(2+)</name>
        <dbReference type="ChEBI" id="CHEBI:29035"/>
        <label>2</label>
    </ligand>
</feature>
<feature type="binding site" evidence="1">
    <location>
        <begin position="88"/>
        <end position="90"/>
    </location>
    <ligand>
        <name>substrate</name>
    </ligand>
</feature>
<feature type="binding site" evidence="1">
    <location>
        <position position="88"/>
    </location>
    <ligand>
        <name>Mn(2+)</name>
        <dbReference type="ChEBI" id="CHEBI:29035"/>
        <label>2</label>
    </ligand>
</feature>
<feature type="binding site" evidence="1">
    <location>
        <position position="119"/>
    </location>
    <ligand>
        <name>substrate</name>
    </ligand>
</feature>
<feature type="binding site" evidence="1">
    <location>
        <begin position="164"/>
        <end position="166"/>
    </location>
    <ligand>
        <name>substrate</name>
    </ligand>
</feature>
<feature type="binding site" evidence="1">
    <location>
        <begin position="186"/>
        <end position="188"/>
    </location>
    <ligand>
        <name>substrate</name>
    </ligand>
</feature>
<feature type="binding site" evidence="1">
    <location>
        <position position="210"/>
    </location>
    <ligand>
        <name>substrate</name>
    </ligand>
</feature>
<feature type="binding site" evidence="1">
    <location>
        <position position="213"/>
    </location>
    <ligand>
        <name>Mn(2+)</name>
        <dbReference type="ChEBI" id="CHEBI:29035"/>
        <label>2</label>
    </ligand>
</feature>
<gene>
    <name type="primary">glpX</name>
    <name type="ordered locus">c4877</name>
</gene>
<protein>
    <recommendedName>
        <fullName>Fructose-1,6-bisphosphatase class 2</fullName>
        <shortName>FBPase class 2</shortName>
        <ecNumber>3.1.3.11</ecNumber>
    </recommendedName>
    <alternativeName>
        <fullName>D-fructose-1,6-bisphosphate 1-phosphohydrolase class 2</fullName>
    </alternativeName>
</protein>
<reference key="1">
    <citation type="journal article" date="2002" name="Proc. Natl. Acad. Sci. U.S.A.">
        <title>Extensive mosaic structure revealed by the complete genome sequence of uropathogenic Escherichia coli.</title>
        <authorList>
            <person name="Welch R.A."/>
            <person name="Burland V."/>
            <person name="Plunkett G. III"/>
            <person name="Redford P."/>
            <person name="Roesch P."/>
            <person name="Rasko D."/>
            <person name="Buckles E.L."/>
            <person name="Liou S.-R."/>
            <person name="Boutin A."/>
            <person name="Hackett J."/>
            <person name="Stroud D."/>
            <person name="Mayhew G.F."/>
            <person name="Rose D.J."/>
            <person name="Zhou S."/>
            <person name="Schwartz D.C."/>
            <person name="Perna N.T."/>
            <person name="Mobley H.L.T."/>
            <person name="Donnenberg M.S."/>
            <person name="Blattner F.R."/>
        </authorList>
    </citation>
    <scope>NUCLEOTIDE SEQUENCE [LARGE SCALE GENOMIC DNA]</scope>
    <source>
        <strain>CFT073 / ATCC 700928 / UPEC</strain>
    </source>
</reference>
<name>GLPX_ECOL6</name>
<evidence type="ECO:0000250" key="1"/>
<evidence type="ECO:0000305" key="2"/>